<accession>Q65152</accession>
<reference key="1">
    <citation type="journal article" date="1995" name="Virology">
        <title>Analysis of the complete nucleotide sequence of African swine fever virus.</title>
        <authorList>
            <person name="Yanez R.J."/>
            <person name="Rodriguez J.M."/>
            <person name="Nogal M.L."/>
            <person name="Yuste L."/>
            <person name="Enriquez C."/>
            <person name="Rodriguez J.F."/>
            <person name="Vinuela E."/>
        </authorList>
    </citation>
    <scope>NUCLEOTIDE SEQUENCE [LARGE SCALE GENOMIC DNA]</scope>
</reference>
<reference key="2">
    <citation type="journal article" date="2018" name="J. Virol.">
        <title>A Proteomic Atlas of the African Swine Fever Virus Particle.</title>
        <authorList>
            <person name="Alejo A."/>
            <person name="Matamoros T."/>
            <person name="Guerra M."/>
            <person name="Andres G."/>
        </authorList>
    </citation>
    <scope>SUBCELLULAR LOCATION</scope>
</reference>
<reference key="3">
    <citation type="journal article" date="2020" name="J. Virol.">
        <title>The African Swine Fever Virus Transcriptome.</title>
        <authorList>
            <person name="Cackett G."/>
            <person name="Matelska D."/>
            <person name="Sykora M."/>
            <person name="Portugal R."/>
            <person name="Malecki M."/>
            <person name="Baehler J."/>
            <person name="Dixon L."/>
            <person name="Werner F."/>
        </authorList>
    </citation>
    <scope>INDUCTION</scope>
</reference>
<reference key="4">
    <citation type="journal article" date="2022" name="Virus Res.">
        <title>African swine fever virus M1249L protein antagonizes type I interferon production via suppressing phosphorylation of TBK1 and degrading IRF3.</title>
        <authorList>
            <person name="Cui S."/>
            <person name="Wang Y."/>
            <person name="Gao X."/>
            <person name="Xin T."/>
            <person name="Wang X."/>
            <person name="Yu H."/>
            <person name="Chen S."/>
            <person name="Jiang Y."/>
            <person name="Chen Q."/>
            <person name="Jiang F."/>
            <person name="Wang D."/>
            <person name="Guo X."/>
            <person name="Jia H."/>
            <person name="Zhu H."/>
        </authorList>
    </citation>
    <scope>FUNCTION</scope>
    <scope>INTERACTION WITH HOST IRF3</scope>
    <scope>SUBCELLULAR LOCATION</scope>
</reference>
<reference key="5">
    <citation type="journal article" date="2019" name="Science">
        <title>Architecture of African swine fever virus and implications for viral assembly.</title>
        <authorList>
            <person name="Wang N."/>
            <person name="Zhao D."/>
            <person name="Wang J."/>
            <person name="Zhang Y."/>
            <person name="Wang M."/>
            <person name="Gao Y."/>
            <person name="Li F."/>
            <person name="Wang J."/>
            <person name="Bu Z."/>
            <person name="Rao Z."/>
            <person name="Wang X."/>
        </authorList>
    </citation>
    <scope>STRUCTURE BY ELECTRON MICROSCOPY (4.8 ANGSTROMS) OF THE ASFV CAPSID</scope>
    <scope>FUNCTION</scope>
    <scope>SUBCELLULAR LOCATION</scope>
    <scope>IDENTIFICATION</scope>
    <scope>INTERACTION WITH HEXON CAPSID PROTEIN P72</scope>
    <scope>INTERACTION WITH MINOR CAPSID PROTEIN P17</scope>
</reference>
<protein>
    <recommendedName>
        <fullName evidence="5">Minor capsid protein M1249L</fullName>
        <shortName>pM1249L</shortName>
    </recommendedName>
</protein>
<name>M1249_ASFB7</name>
<proteinExistence type="evidence at protein level"/>
<sequence length="1249" mass="144337">MEEVITIAQIVHRGTDILSLNNEEIEALVDEIYSTLKGSNDIKNIRLIDFLFTLKDFVNHVRAEQSKLPDLSMPMEAYIRQLLVDPDVVPIVSEKKKELRVRPSTRKEIFLINGTHLAVPAEAPIEIYGLKLRLKSFSPQCFMRMAEIGSFSPETLGYVASGANLTNFIRVFMKCVDQETWKKNGEGVVVTTKENIIQFTHQYIELYKFLRSGGHSWLINRLAEEMVHRKLDREDQGSHISNIVETEEIEPEENIKRVIFFLKELSTMYSVSPVFTSGYMPLLYDLYRAGYLEVLWNPVEQKFLQHAEQREKEQMILQQVDMKLTEVITQARQYFKIMEEKIGRVQSDAIREILTMEGKVDDPNSILQEVIKACGKQEAELITTEYLNIKKQWELQEKNACAHLKLVKQLRSGLQYAELLKVLESIRVLYKEKNNTTNWNLCKACGFKLLCPHVDMLIQLQAAEASYDTMRTKLMKFSGINKEKENNQGLIYSYFCKICGEELAHFIQEDRTADVGVIGDLNSKLRIFIWQETMKACTFIHFGKLVDVKQFANIAVNVCLPLVYSIENIKKEEDYDPLTQLYAVIYIYAYILNLIYSSQKNKEFLTITIHGMKADSSLNAYVTFLLEKMMQQYSGIINQLSEITDQWIANNFREAFKKIIHQNGLQGLSVQDDTKVLLTEILLGPMYDYAATVARIDGSIPMHKPRTPKEAEYEFKTVIGRTPAELLSQKEFYDKIYTSKYRPDFTQLARLNDIYFQEESLRVWWGGRDEEKTSTLIYLRAYELFLKYLQNAPNFNSELAEFKTYENAYGEQKALLAQQGFYNIFDPNTGRADQRTRLFEYKRLPISTLYDERGLPHKWTIYVYKAVDSSQKPAEIEVTRKDVIKKIDNHYALADLRCSVCHVLQHEVGQLNIKKVQTALKASLEFNTFYAFYESRCPKGGLHDFQDKKCVKCGLFTYIIYDHLSQPELVHDYYNNYKDQYDKEKMSIRSIQIKKDMTTPSSETQPKPPQEPWTFDYGKIIKTAKILDISPAVIEAIGAMEGRSYADIREGQGAPPPPTSMDDPRLMAVDSAVRIFLYNYNCLRHVSTFNKPPMHVERLVKHLSYEEKEDLEKVLPNVVNEYHTTFKHLRVTDPASALLYSIEFLCVSFLTLYEIKEPSWVVNIVREFALTELNTIIQSEKLLSKPGAFNFMIFGEDFVCSGEDSSMDDISAYSSPGLFGEDIIDRLDDPFSIEDVDISLDVLDNLAPQ</sequence>
<comment type="function">
    <text evidence="2 4">Together with the penton and the other minor capsid proteins (p17, p49), forms a complicated network immediately below the outer capsid shell, stabilizing the whole capsid (PubMed:31624094). In addition, blocks IFN-beta transactivation mediated by the cGAS-STING pathway and regulates the transcriptional activity of IFN-beta. Mechanistically, suppresses the phosphorylation of host key adapter protein TBK1 and degrades host IRF3 in the cytoplasm (PubMed:35853521).</text>
</comment>
<comment type="subunit">
    <text evidence="2 4">Interacts with the minor capsid protein p17 and with the hexon capsid protein p72 capsomers; these interactions form a rigid zipper structure that stabilizes the capsomers (PubMed:31624094). Interacts with host IRF3 (PubMed:35853521).</text>
</comment>
<comment type="subcellular location">
    <subcellularLocation>
        <location evidence="1 2">Virion</location>
    </subcellularLocation>
    <subcellularLocation>
        <location evidence="4">Host cytoplasm</location>
    </subcellularLocation>
</comment>
<comment type="induction">
    <text evidence="3">Expressed in the late phase of the viral replicative cycle.</text>
</comment>
<comment type="similarity">
    <text evidence="6">Belongs to the asfivirus M1249L family.</text>
</comment>
<organismHost>
    <name type="scientific">Ornithodoros</name>
    <name type="common">relapsing fever ticks</name>
    <dbReference type="NCBI Taxonomy" id="6937"/>
</organismHost>
<organismHost>
    <name type="scientific">Sus scrofa</name>
    <name type="common">Pig</name>
    <dbReference type="NCBI Taxonomy" id="9823"/>
</organismHost>
<dbReference type="EMBL" id="U18466">
    <property type="protein sequence ID" value="AAA65290.1"/>
    <property type="molecule type" value="Genomic_DNA"/>
</dbReference>
<dbReference type="RefSeq" id="NP_042754.1">
    <property type="nucleotide sequence ID" value="NC_001659.2"/>
</dbReference>
<dbReference type="PDB" id="8XX5">
    <property type="method" value="EM"/>
    <property type="resolution" value="2.40 A"/>
    <property type="chains" value="I=67-1249"/>
</dbReference>
<dbReference type="PDB" id="8XXT">
    <property type="method" value="EM"/>
    <property type="resolution" value="2.85 A"/>
    <property type="chains" value="I=80-1249"/>
</dbReference>
<dbReference type="PDB" id="8XY6">
    <property type="method" value="EM"/>
    <property type="resolution" value="3.00 A"/>
    <property type="chains" value="I=673-1249"/>
</dbReference>
<dbReference type="PDB" id="8Y0E">
    <property type="method" value="EM"/>
    <property type="resolution" value="3.00 A"/>
    <property type="chains" value="I=1-1249"/>
</dbReference>
<dbReference type="PDB" id="8YQT">
    <property type="method" value="EM"/>
    <property type="resolution" value="2.56 A"/>
    <property type="chains" value="J=1-1249"/>
</dbReference>
<dbReference type="PDB" id="8YQU">
    <property type="method" value="EM"/>
    <property type="resolution" value="2.85 A"/>
    <property type="chains" value="J=1-1249"/>
</dbReference>
<dbReference type="PDB" id="8YQW">
    <property type="method" value="EM"/>
    <property type="resolution" value="2.68 A"/>
    <property type="chains" value="J=1-1249"/>
</dbReference>
<dbReference type="PDB" id="8YQX">
    <property type="method" value="EM"/>
    <property type="resolution" value="2.97 A"/>
    <property type="chains" value="J=1-1249"/>
</dbReference>
<dbReference type="PDB" id="8YQY">
    <property type="method" value="EM"/>
    <property type="resolution" value="3.68 A"/>
    <property type="chains" value="J=1-1249"/>
</dbReference>
<dbReference type="PDBsum" id="8XX5"/>
<dbReference type="PDBsum" id="8XXT"/>
<dbReference type="PDBsum" id="8XY6"/>
<dbReference type="PDBsum" id="8Y0E"/>
<dbReference type="PDBsum" id="8YQT"/>
<dbReference type="PDBsum" id="8YQU"/>
<dbReference type="PDBsum" id="8YQW"/>
<dbReference type="PDBsum" id="8YQX"/>
<dbReference type="PDBsum" id="8YQY"/>
<dbReference type="SMR" id="Q65152"/>
<dbReference type="GeneID" id="22220290"/>
<dbReference type="KEGG" id="vg:22220290"/>
<dbReference type="Proteomes" id="UP000000624">
    <property type="component" value="Segment"/>
</dbReference>
<dbReference type="GO" id="GO:0030430">
    <property type="term" value="C:host cell cytoplasm"/>
    <property type="evidence" value="ECO:0007669"/>
    <property type="project" value="UniProtKB-SubCell"/>
</dbReference>
<dbReference type="GO" id="GO:0044423">
    <property type="term" value="C:virion component"/>
    <property type="evidence" value="ECO:0007669"/>
    <property type="project" value="UniProtKB-KW"/>
</dbReference>
<dbReference type="GO" id="GO:0039548">
    <property type="term" value="P:symbiont-mediated suppression of host cytoplasmic pattern recognition receptor signaling pathway via inhibition of IRF3 activity"/>
    <property type="evidence" value="ECO:0007669"/>
    <property type="project" value="UniProtKB-KW"/>
</dbReference>
<organism>
    <name type="scientific">African swine fever virus (strain Badajoz 1971 Vero-adapted)</name>
    <name type="common">Ba71V</name>
    <name type="synonym">ASFV</name>
    <dbReference type="NCBI Taxonomy" id="10498"/>
    <lineage>
        <taxon>Viruses</taxon>
        <taxon>Varidnaviria</taxon>
        <taxon>Bamfordvirae</taxon>
        <taxon>Nucleocytoviricota</taxon>
        <taxon>Pokkesviricetes</taxon>
        <taxon>Asfuvirales</taxon>
        <taxon>Asfarviridae</taxon>
        <taxon>Asfivirus</taxon>
        <taxon>African swine fever virus</taxon>
    </lineage>
</organism>
<feature type="chain" id="PRO_0000373609" description="Minor capsid protein M1249L">
    <location>
        <begin position="1"/>
        <end position="1249"/>
    </location>
</feature>
<gene>
    <name type="ordered locus">Ba71V-060</name>
    <name type="ORF">M1249L</name>
</gene>
<keyword id="KW-0002">3D-structure</keyword>
<keyword id="KW-1035">Host cytoplasm</keyword>
<keyword id="KW-0945">Host-virus interaction</keyword>
<keyword id="KW-1090">Inhibition of host innate immune response by virus</keyword>
<keyword id="KW-1092">Inhibition of host IRF3 by virus</keyword>
<keyword id="KW-1113">Inhibition of host RLR pathway by virus</keyword>
<keyword id="KW-0426">Late protein</keyword>
<keyword id="KW-1185">Reference proteome</keyword>
<keyword id="KW-0899">Viral immunoevasion</keyword>
<keyword id="KW-0946">Virion</keyword>
<evidence type="ECO:0000269" key="1">
    <source>
    </source>
</evidence>
<evidence type="ECO:0000269" key="2">
    <source>
    </source>
</evidence>
<evidence type="ECO:0000269" key="3">
    <source>
    </source>
</evidence>
<evidence type="ECO:0000269" key="4">
    <source>
    </source>
</evidence>
<evidence type="ECO:0000303" key="5">
    <source>
    </source>
</evidence>
<evidence type="ECO:0000305" key="6"/>